<gene>
    <name type="primary">lplB</name>
    <name type="ordered locus">Ta0513</name>
</gene>
<dbReference type="EC" id="6.3.1.20" evidence="1 2"/>
<dbReference type="EMBL" id="AL445064">
    <property type="protein sequence ID" value="CAC11653.1"/>
    <property type="molecule type" value="Genomic_DNA"/>
</dbReference>
<dbReference type="RefSeq" id="WP_048161622.1">
    <property type="nucleotide sequence ID" value="NC_002578.1"/>
</dbReference>
<dbReference type="PDB" id="3R07">
    <property type="method" value="X-ray"/>
    <property type="resolution" value="2.70 A"/>
    <property type="chains" value="C=7-94"/>
</dbReference>
<dbReference type="PDBsum" id="3R07"/>
<dbReference type="SMR" id="Q9HKT2"/>
<dbReference type="IntAct" id="Q9HKT2">
    <property type="interactions" value="2"/>
</dbReference>
<dbReference type="MINT" id="Q9HKT2"/>
<dbReference type="STRING" id="273075.gene:9571731"/>
<dbReference type="PaxDb" id="273075-Ta0513m"/>
<dbReference type="EnsemblBacteria" id="CAC11653">
    <property type="protein sequence ID" value="CAC11653"/>
    <property type="gene ID" value="CAC11653"/>
</dbReference>
<dbReference type="KEGG" id="tac:Ta0513"/>
<dbReference type="eggNOG" id="arCOG03837">
    <property type="taxonomic scope" value="Archaea"/>
</dbReference>
<dbReference type="HOGENOM" id="CLU_181210_0_0_2"/>
<dbReference type="InParanoid" id="Q9HKT2"/>
<dbReference type="BioCyc" id="MetaCyc:MONOMER-15674"/>
<dbReference type="BRENDA" id="6.3.1.20">
    <property type="organism ID" value="6324"/>
</dbReference>
<dbReference type="UniPathway" id="UPA00537">
    <property type="reaction ID" value="UER00594"/>
</dbReference>
<dbReference type="UniPathway" id="UPA00537">
    <property type="reaction ID" value="UER00595"/>
</dbReference>
<dbReference type="EvolutionaryTrace" id="Q9HKT2"/>
<dbReference type="Proteomes" id="UP000001024">
    <property type="component" value="Chromosome"/>
</dbReference>
<dbReference type="GO" id="GO:0032991">
    <property type="term" value="C:protein-containing complex"/>
    <property type="evidence" value="ECO:0000314"/>
    <property type="project" value="UniProtKB"/>
</dbReference>
<dbReference type="GO" id="GO:0005524">
    <property type="term" value="F:ATP binding"/>
    <property type="evidence" value="ECO:0007669"/>
    <property type="project" value="UniProtKB-KW"/>
</dbReference>
<dbReference type="GO" id="GO:0016979">
    <property type="term" value="F:lipoate-protein ligase activity"/>
    <property type="evidence" value="ECO:0007669"/>
    <property type="project" value="UniProtKB-EC"/>
</dbReference>
<dbReference type="GO" id="GO:0009249">
    <property type="term" value="P:protein lipoylation"/>
    <property type="evidence" value="ECO:0000314"/>
    <property type="project" value="UniProtKB"/>
</dbReference>
<dbReference type="Gene3D" id="3.30.390.50">
    <property type="entry name" value="CO dehydrogenase flavoprotein, C-terminal domain"/>
    <property type="match status" value="1"/>
</dbReference>
<dbReference type="InterPro" id="IPR019491">
    <property type="entry name" value="Lipoate_protein_ligase_C"/>
</dbReference>
<dbReference type="InterPro" id="IPR050664">
    <property type="entry name" value="Octanoyltrans_LipM/LipL"/>
</dbReference>
<dbReference type="PANTHER" id="PTHR43679:SF2">
    <property type="entry name" value="OCTANOYL-[GCVH]:PROTEIN N-OCTANOYLTRANSFERASE"/>
    <property type="match status" value="1"/>
</dbReference>
<dbReference type="PANTHER" id="PTHR43679">
    <property type="entry name" value="OCTANOYLTRANSFERASE LIPM-RELATED"/>
    <property type="match status" value="1"/>
</dbReference>
<dbReference type="Pfam" id="PF10437">
    <property type="entry name" value="Lip_prot_lig_C"/>
    <property type="match status" value="1"/>
</dbReference>
<dbReference type="SUPFAM" id="SSF82649">
    <property type="entry name" value="SufE/NifU"/>
    <property type="match status" value="1"/>
</dbReference>
<feature type="chain" id="PRO_0000311127" description="Lipoate-protein ligase A subunit 2">
    <location>
        <begin position="1"/>
        <end position="94"/>
    </location>
</feature>
<feature type="strand" evidence="3">
    <location>
        <begin position="8"/>
        <end position="16"/>
    </location>
</feature>
<feature type="strand" evidence="3">
    <location>
        <begin position="21"/>
        <end position="29"/>
    </location>
</feature>
<feature type="strand" evidence="3">
    <location>
        <begin position="32"/>
        <end position="42"/>
    </location>
</feature>
<feature type="helix" evidence="3">
    <location>
        <begin position="49"/>
        <end position="57"/>
    </location>
</feature>
<feature type="helix" evidence="3">
    <location>
        <begin position="65"/>
        <end position="73"/>
    </location>
</feature>
<feature type="turn" evidence="3">
    <location>
        <begin position="74"/>
        <end position="76"/>
    </location>
</feature>
<feature type="helix" evidence="3">
    <location>
        <begin position="86"/>
        <end position="91"/>
    </location>
</feature>
<protein>
    <recommendedName>
        <fullName>Lipoate-protein ligase A subunit 2</fullName>
        <ecNumber evidence="1 2">6.3.1.20</ecNumber>
    </recommendedName>
    <alternativeName>
        <fullName>C-terminal domain of LplA</fullName>
        <shortName>CTD</shortName>
    </alternativeName>
    <alternativeName>
        <fullName>Lipoate--protein ligase subunit 2</fullName>
    </alternativeName>
</protein>
<reference key="1">
    <citation type="journal article" date="2000" name="Nature">
        <title>The genome sequence of the thermoacidophilic scavenger Thermoplasma acidophilum.</title>
        <authorList>
            <person name="Ruepp A."/>
            <person name="Graml W."/>
            <person name="Santos-Martinez M.-L."/>
            <person name="Koretke K.K."/>
            <person name="Volker C."/>
            <person name="Mewes H.-W."/>
            <person name="Frishman D."/>
            <person name="Stocker S."/>
            <person name="Lupas A.N."/>
            <person name="Baumeister W."/>
        </authorList>
    </citation>
    <scope>NUCLEOTIDE SEQUENCE [LARGE SCALE GENOMIC DNA]</scope>
    <source>
        <strain>ATCC 25905 / DSM 1728 / JCM 9062 / NBRC 15155 / AMRC-C165</strain>
    </source>
</reference>
<reference key="2">
    <citation type="journal article" date="2006" name="J. Mol. Biol.">
        <title>Structure of a putative lipoate protein ligase from Thermoplasma acidophilum and the mechanism of target selection for post-translational modification.</title>
        <authorList>
            <person name="McManus E."/>
            <person name="Luisi B.F."/>
            <person name="Perham R.N."/>
        </authorList>
    </citation>
    <scope>POSSIBLE FUNCTION</scope>
</reference>
<reference key="3">
    <citation type="journal article" date="2009" name="FEBS J.">
        <title>A unique lipoylation system in the Archaea. Lipoylation in Thermoplasma acidophilum requires two proteins.</title>
        <authorList>
            <person name="Posner M.G."/>
            <person name="Upadhyay A."/>
            <person name="Bagby S."/>
            <person name="Hough D.W."/>
            <person name="Danson M.J."/>
        </authorList>
    </citation>
    <scope>FUNCTION</scope>
    <scope>CATALYTIC ACTIVITY</scope>
    <scope>SUBUNIT</scope>
    <scope>INTERACTION WITH TA0514</scope>
    <scope>PATHWAY</scope>
    <source>
        <strain>ATCC 25905 / DSM 1728 / JCM 9062 / NBRC 15155 / AMRC-C165</strain>
    </source>
</reference>
<reference key="4">
    <citation type="journal article" date="2009" name="J. Biol. Chem.">
        <title>The Thermoplasma acidophilum LplA-LplB complex defines a new class of bipartite lipoate-protein ligases.</title>
        <authorList>
            <person name="Christensen Q.H."/>
            <person name="Cronan J.E."/>
        </authorList>
    </citation>
    <scope>GENE NAME</scope>
    <scope>FUNCTION</scope>
    <scope>CATALYTIC ACTIVITY</scope>
    <scope>SUBSTRATE SPECIFICITY</scope>
    <scope>SUBUNIT</scope>
    <scope>INTERACTION WITH TA0514</scope>
    <scope>PATHWAY</scope>
    <source>
        <strain>ATCC 25905 / DSM 1728 / JCM 9062 / NBRC 15155 / AMRC-C165</strain>
    </source>
</reference>
<evidence type="ECO:0000269" key="1">
    <source>
    </source>
</evidence>
<evidence type="ECO:0000269" key="2">
    <source>
    </source>
</evidence>
<evidence type="ECO:0007829" key="3">
    <source>
        <dbReference type="PDB" id="3R07"/>
    </source>
</evidence>
<accession>Q9HKT2</accession>
<organism>
    <name type="scientific">Thermoplasma acidophilum (strain ATCC 25905 / DSM 1728 / JCM 9062 / NBRC 15155 / AMRC-C165)</name>
    <dbReference type="NCBI Taxonomy" id="273075"/>
    <lineage>
        <taxon>Archaea</taxon>
        <taxon>Methanobacteriati</taxon>
        <taxon>Thermoplasmatota</taxon>
        <taxon>Thermoplasmata</taxon>
        <taxon>Thermoplasmatales</taxon>
        <taxon>Thermoplasmataceae</taxon>
        <taxon>Thermoplasma</taxon>
    </lineage>
</organism>
<sequence>MVLNYTMHMMYSKNWKAKKGLIRVTLDLDGNRIKDIHISGDFFMFPEDSINRLEDMLRGSSIEKINDIIRDFYNQGVITPGVEPEDFIQALRVI</sequence>
<proteinExistence type="evidence at protein level"/>
<comment type="function">
    <text evidence="1 2">Part of a lipoate-protein ligase complex that catalyzes both the ATP-dependent activation of exogenously supplied lipoate to lipoyl-AMP and the transfer of the activated lipoyl onto the lipoyl domains of lipoate-dependent enzymes. Can also use octanoate as substrate.</text>
</comment>
<comment type="catalytic activity">
    <reaction evidence="1 2">
        <text>L-lysyl-[lipoyl-carrier protein] + (R)-lipoate + ATP = N(6)-[(R)-lipoyl]-L-lysyl-[lipoyl-carrier protein] + AMP + diphosphate + H(+)</text>
        <dbReference type="Rhea" id="RHEA:49288"/>
        <dbReference type="Rhea" id="RHEA-COMP:10500"/>
        <dbReference type="Rhea" id="RHEA-COMP:10502"/>
        <dbReference type="ChEBI" id="CHEBI:15378"/>
        <dbReference type="ChEBI" id="CHEBI:29969"/>
        <dbReference type="ChEBI" id="CHEBI:30616"/>
        <dbReference type="ChEBI" id="CHEBI:33019"/>
        <dbReference type="ChEBI" id="CHEBI:83088"/>
        <dbReference type="ChEBI" id="CHEBI:83099"/>
        <dbReference type="ChEBI" id="CHEBI:456215"/>
        <dbReference type="EC" id="6.3.1.20"/>
    </reaction>
</comment>
<comment type="pathway">
    <text>Protein modification; protein lipoylation via exogenous pathway; protein N(6)-(lipoyl)lysine from lipoate: step 1/2.</text>
</comment>
<comment type="pathway">
    <text>Protein modification; protein lipoylation via exogenous pathway; protein N(6)-(lipoyl)lysine from lipoate: step 2/2.</text>
</comment>
<comment type="subunit">
    <text evidence="1 2">Heterodimer composed of LplA and LplB.</text>
</comment>
<comment type="miscellaneous">
    <text>In contrast to E.coli, where the lipoate-protein ligase is encoded by a single gene product (LplA) with a large N-terminal domain and a small C-terminal domain, the same activity in T.acidophilum is dependent on two separate proteins, corresponding to the two domains of E.coli LplA, respectively.</text>
</comment>
<name>LPLAC_THEAC</name>
<keyword id="KW-0002">3D-structure</keyword>
<keyword id="KW-0067">ATP-binding</keyword>
<keyword id="KW-0436">Ligase</keyword>
<keyword id="KW-0547">Nucleotide-binding</keyword>
<keyword id="KW-1185">Reference proteome</keyword>